<proteinExistence type="evidence at protein level"/>
<feature type="chain" id="PRO_0000056228" description="E3 ubiquitin-protein ligase Midline-1">
    <location>
        <begin position="1"/>
        <end position="680"/>
    </location>
</feature>
<feature type="domain" description="COS" evidence="8">
    <location>
        <begin position="320"/>
        <end position="379"/>
    </location>
</feature>
<feature type="domain" description="Fibronectin type-III" evidence="6">
    <location>
        <begin position="384"/>
        <end position="494"/>
    </location>
</feature>
<feature type="domain" description="B30.2/SPRY" evidence="7">
    <location>
        <begin position="495"/>
        <end position="672"/>
    </location>
</feature>
<feature type="zinc finger region" description="RING-type" evidence="5">
    <location>
        <begin position="10"/>
        <end position="60"/>
    </location>
</feature>
<feature type="zinc finger region" description="B box-type 1" evidence="4">
    <location>
        <begin position="116"/>
        <end position="165"/>
    </location>
</feature>
<feature type="zinc finger region" description="B box-type 2" evidence="4">
    <location>
        <begin position="172"/>
        <end position="212"/>
    </location>
</feature>
<feature type="region of interest" description="Disordered" evidence="9">
    <location>
        <begin position="484"/>
        <end position="503"/>
    </location>
</feature>
<feature type="region of interest" description="Disordered" evidence="9">
    <location>
        <begin position="516"/>
        <end position="535"/>
    </location>
</feature>
<feature type="coiled-coil region" evidence="3">
    <location>
        <begin position="205"/>
        <end position="264"/>
    </location>
</feature>
<feature type="compositionally biased region" description="Polar residues" evidence="9">
    <location>
        <begin position="484"/>
        <end position="498"/>
    </location>
</feature>
<feature type="compositionally biased region" description="Basic and acidic residues" evidence="9">
    <location>
        <begin position="516"/>
        <end position="533"/>
    </location>
</feature>
<feature type="binding site" evidence="1">
    <location>
        <position position="119"/>
    </location>
    <ligand>
        <name>Zn(2+)</name>
        <dbReference type="ChEBI" id="CHEBI:29105"/>
        <label>1</label>
    </ligand>
</feature>
<feature type="binding site" evidence="1">
    <location>
        <position position="122"/>
    </location>
    <ligand>
        <name>Zn(2+)</name>
        <dbReference type="ChEBI" id="CHEBI:29105"/>
        <label>1</label>
    </ligand>
</feature>
<feature type="binding site" evidence="1">
    <location>
        <position position="134"/>
    </location>
    <ligand>
        <name>Zn(2+)</name>
        <dbReference type="ChEBI" id="CHEBI:29105"/>
        <label>2</label>
    </ligand>
</feature>
<feature type="binding site" evidence="1">
    <location>
        <position position="137"/>
    </location>
    <ligand>
        <name>Zn(2+)</name>
        <dbReference type="ChEBI" id="CHEBI:29105"/>
        <label>2</label>
    </ligand>
</feature>
<feature type="binding site" evidence="1">
    <location>
        <position position="142"/>
    </location>
    <ligand>
        <name>Zn(2+)</name>
        <dbReference type="ChEBI" id="CHEBI:29105"/>
        <label>1</label>
    </ligand>
</feature>
<feature type="binding site" evidence="1">
    <location>
        <position position="145"/>
    </location>
    <ligand>
        <name>Zn(2+)</name>
        <dbReference type="ChEBI" id="CHEBI:29105"/>
        <label>1</label>
    </ligand>
</feature>
<feature type="binding site" evidence="1">
    <location>
        <position position="150"/>
    </location>
    <ligand>
        <name>Zn(2+)</name>
        <dbReference type="ChEBI" id="CHEBI:29105"/>
        <label>2</label>
    </ligand>
</feature>
<feature type="binding site" evidence="1">
    <location>
        <position position="159"/>
    </location>
    <ligand>
        <name>Zn(2+)</name>
        <dbReference type="ChEBI" id="CHEBI:29105"/>
        <label>2</label>
    </ligand>
</feature>
<feature type="binding site" evidence="4">
    <location>
        <position position="175"/>
    </location>
    <ligand>
        <name>Zn(2+)</name>
        <dbReference type="ChEBI" id="CHEBI:29105"/>
        <label>3</label>
    </ligand>
</feature>
<feature type="binding site" evidence="4">
    <location>
        <position position="178"/>
    </location>
    <ligand>
        <name>Zn(2+)</name>
        <dbReference type="ChEBI" id="CHEBI:29105"/>
        <label>3</label>
    </ligand>
</feature>
<feature type="binding site" evidence="4">
    <location>
        <position position="198"/>
    </location>
    <ligand>
        <name>Zn(2+)</name>
        <dbReference type="ChEBI" id="CHEBI:29105"/>
        <label>3</label>
    </ligand>
</feature>
<feature type="binding site" evidence="4">
    <location>
        <position position="204"/>
    </location>
    <ligand>
        <name>Zn(2+)</name>
        <dbReference type="ChEBI" id="CHEBI:29105"/>
        <label>3</label>
    </ligand>
</feature>
<feature type="modified residue" description="Phosphoserine" evidence="2">
    <location>
        <position position="92"/>
    </location>
</feature>
<feature type="modified residue" description="Phosphoserine" evidence="2">
    <location>
        <position position="96"/>
    </location>
</feature>
<feature type="modified residue" description="Phosphoserine" evidence="2">
    <location>
        <position position="524"/>
    </location>
</feature>
<feature type="splice variant" id="VSP_010811" description="In isoform 3." evidence="12">
    <location>
        <begin position="183"/>
        <end position="220"/>
    </location>
</feature>
<feature type="splice variant" id="VSP_005736" description="In isoform 2 and isoform 3." evidence="12 13 14">
    <original>NVACDGTCLLGSAG</original>
    <variation>S</variation>
    <location>
        <begin position="429"/>
        <end position="442"/>
    </location>
</feature>
<feature type="sequence conflict" description="In Ref. 4; AAH53704." evidence="15" ref="4">
    <original>L</original>
    <variation>P</variation>
    <location>
        <position position="65"/>
    </location>
</feature>
<feature type="sequence conflict" description="In Ref. 4; AAH53704." evidence="15" ref="4">
    <original>N</original>
    <variation>D</variation>
    <location>
        <position position="109"/>
    </location>
</feature>
<feature type="sequence conflict" description="In Ref. 2; AAB83986." evidence="15" ref="2">
    <original>M</original>
    <variation>T</variation>
    <location>
        <position position="174"/>
    </location>
</feature>
<feature type="sequence conflict" description="In Ref. 4; AAH53704." evidence="15" ref="4">
    <original>H</original>
    <variation>Y</variation>
    <location>
        <position position="464"/>
    </location>
</feature>
<feature type="sequence conflict" description="In Ref. 1; CAA75113." evidence="15" ref="1">
    <original>E</original>
    <variation>D</variation>
    <location>
        <position position="523"/>
    </location>
</feature>
<feature type="sequence conflict" description="In Ref. 2; AAB83986." evidence="15" ref="2">
    <original>A</original>
    <variation>T</variation>
    <location>
        <position position="633"/>
    </location>
</feature>
<evidence type="ECO:0000250" key="1"/>
<evidence type="ECO:0000250" key="2">
    <source>
        <dbReference type="UniProtKB" id="O15344"/>
    </source>
</evidence>
<evidence type="ECO:0000255" key="3"/>
<evidence type="ECO:0000255" key="4">
    <source>
        <dbReference type="PROSITE-ProRule" id="PRU00024"/>
    </source>
</evidence>
<evidence type="ECO:0000255" key="5">
    <source>
        <dbReference type="PROSITE-ProRule" id="PRU00175"/>
    </source>
</evidence>
<evidence type="ECO:0000255" key="6">
    <source>
        <dbReference type="PROSITE-ProRule" id="PRU00316"/>
    </source>
</evidence>
<evidence type="ECO:0000255" key="7">
    <source>
        <dbReference type="PROSITE-ProRule" id="PRU00548"/>
    </source>
</evidence>
<evidence type="ECO:0000255" key="8">
    <source>
        <dbReference type="PROSITE-ProRule" id="PRU00586"/>
    </source>
</evidence>
<evidence type="ECO:0000256" key="9">
    <source>
        <dbReference type="SAM" id="MobiDB-lite"/>
    </source>
</evidence>
<evidence type="ECO:0000269" key="10">
    <source>
    </source>
</evidence>
<evidence type="ECO:0000269" key="11">
    <source>
    </source>
</evidence>
<evidence type="ECO:0000303" key="12">
    <source>
    </source>
</evidence>
<evidence type="ECO:0000303" key="13">
    <source>
    </source>
</evidence>
<evidence type="ECO:0000303" key="14">
    <source>
    </source>
</evidence>
<evidence type="ECO:0000305" key="15"/>
<name>TRI18_MOUSE</name>
<gene>
    <name type="primary">Mid1</name>
    <name type="synonym">Fxy</name>
    <name type="synonym">Trim18</name>
</gene>
<accession>O70583</accession>
<accession>B1AV00</accession>
<accession>O35418</accession>
<accession>Q7TPT6</accession>
<dbReference type="EC" id="2.3.2.27"/>
<dbReference type="EMBL" id="Y14848">
    <property type="protein sequence ID" value="CAA75113.1"/>
    <property type="molecule type" value="mRNA"/>
</dbReference>
<dbReference type="EMBL" id="AF026565">
    <property type="protein sequence ID" value="AAB83986.1"/>
    <property type="molecule type" value="mRNA"/>
</dbReference>
<dbReference type="EMBL" id="AL672015">
    <property type="status" value="NOT_ANNOTATED_CDS"/>
    <property type="molecule type" value="Genomic_DNA"/>
</dbReference>
<dbReference type="EMBL" id="CR478112">
    <property type="status" value="NOT_ANNOTATED_CDS"/>
    <property type="molecule type" value="Genomic_DNA"/>
</dbReference>
<dbReference type="EMBL" id="BC053704">
    <property type="protein sequence ID" value="AAH53704.1"/>
    <property type="status" value="ALT_SEQ"/>
    <property type="molecule type" value="mRNA"/>
</dbReference>
<dbReference type="CCDS" id="CCDS41215.1">
    <molecule id="O70583-1"/>
</dbReference>
<dbReference type="PIR" id="T09013">
    <property type="entry name" value="T09013"/>
</dbReference>
<dbReference type="RefSeq" id="NP_001277433.1">
    <molecule id="O70583-2"/>
    <property type="nucleotide sequence ID" value="NM_001290504.2"/>
</dbReference>
<dbReference type="RefSeq" id="NP_001277434.1">
    <molecule id="O70583-2"/>
    <property type="nucleotide sequence ID" value="NM_001290505.2"/>
</dbReference>
<dbReference type="RefSeq" id="NP_001277435.1">
    <molecule id="O70583-3"/>
    <property type="nucleotide sequence ID" value="NM_001290506.2"/>
</dbReference>
<dbReference type="RefSeq" id="NP_001412811.1">
    <molecule id="O70583-1"/>
    <property type="nucleotide sequence ID" value="NM_001425882.1"/>
</dbReference>
<dbReference type="RefSeq" id="NP_001412812.1">
    <molecule id="O70583-1"/>
    <property type="nucleotide sequence ID" value="NM_001425883.1"/>
</dbReference>
<dbReference type="RefSeq" id="NP_001412814.1">
    <molecule id="O70583-2"/>
    <property type="nucleotide sequence ID" value="NM_001425885.1"/>
</dbReference>
<dbReference type="RefSeq" id="NP_034927.2">
    <molecule id="O70583-1"/>
    <property type="nucleotide sequence ID" value="NM_010797.4"/>
</dbReference>
<dbReference type="RefSeq" id="XP_011246091.1">
    <property type="nucleotide sequence ID" value="XM_011247789.2"/>
</dbReference>
<dbReference type="RefSeq" id="XP_017173897.1">
    <property type="nucleotide sequence ID" value="XM_017318408.1"/>
</dbReference>
<dbReference type="RefSeq" id="XP_017173898.1">
    <property type="nucleotide sequence ID" value="XM_017318409.1"/>
</dbReference>
<dbReference type="RefSeq" id="XP_017173899.1">
    <molecule id="O70583-1"/>
    <property type="nucleotide sequence ID" value="XM_017318410.3"/>
</dbReference>
<dbReference type="RefSeq" id="XP_030107101.1">
    <molecule id="O70583-2"/>
    <property type="nucleotide sequence ID" value="XM_030251241.2"/>
</dbReference>
<dbReference type="RefSeq" id="XP_030107104.1">
    <molecule id="O70583-3"/>
    <property type="nucleotide sequence ID" value="XM_030251244.2"/>
</dbReference>
<dbReference type="BMRB" id="O70583"/>
<dbReference type="BioGRID" id="201417">
    <property type="interactions" value="4"/>
</dbReference>
<dbReference type="FunCoup" id="O70583">
    <property type="interactions" value="685"/>
</dbReference>
<dbReference type="IntAct" id="O70583">
    <property type="interactions" value="2"/>
</dbReference>
<dbReference type="MINT" id="O70583"/>
<dbReference type="STRING" id="10090.ENSMUSP00000107733"/>
<dbReference type="GlyGen" id="O70583">
    <property type="glycosylation" value="1 site, 1 O-linked glycan (1 site)"/>
</dbReference>
<dbReference type="iPTMnet" id="O70583"/>
<dbReference type="PhosphoSitePlus" id="O70583"/>
<dbReference type="PaxDb" id="10090-ENSMUSP00000107733"/>
<dbReference type="ProteomicsDB" id="258972">
    <molecule id="O70583-1"/>
</dbReference>
<dbReference type="ProteomicsDB" id="258973">
    <molecule id="O70583-2"/>
</dbReference>
<dbReference type="ProteomicsDB" id="258974">
    <molecule id="O70583-3"/>
</dbReference>
<dbReference type="Pumba" id="O70583"/>
<dbReference type="Antibodypedia" id="499">
    <property type="antibodies" value="243 antibodies from 29 providers"/>
</dbReference>
<dbReference type="DNASU" id="17318"/>
<dbReference type="Ensembl" id="ENSMUST00000036753.12">
    <molecule id="O70583-1"/>
    <property type="protein sequence ID" value="ENSMUSP00000038765.6"/>
    <property type="gene ID" value="ENSMUSG00000035299.18"/>
</dbReference>
<dbReference type="Ensembl" id="ENSMUST00000112104.8">
    <molecule id="O70583-1"/>
    <property type="protein sequence ID" value="ENSMUSP00000107732.2"/>
    <property type="gene ID" value="ENSMUSG00000035299.18"/>
</dbReference>
<dbReference type="Ensembl" id="ENSMUST00000112105.8">
    <molecule id="O70583-1"/>
    <property type="protein sequence ID" value="ENSMUSP00000107733.2"/>
    <property type="gene ID" value="ENSMUSG00000035299.18"/>
</dbReference>
<dbReference type="Ensembl" id="ENSMUST00000163810.9">
    <molecule id="O70583-1"/>
    <property type="protein sequence ID" value="ENSMUSP00000128176.3"/>
    <property type="gene ID" value="ENSMUSG00000035299.18"/>
</dbReference>
<dbReference type="GeneID" id="17318"/>
<dbReference type="KEGG" id="mmu:17318"/>
<dbReference type="UCSC" id="uc009uya.2">
    <molecule id="O70583-1"/>
    <property type="organism name" value="mouse"/>
</dbReference>
<dbReference type="UCSC" id="uc009uyc.2">
    <molecule id="O70583-2"/>
    <property type="organism name" value="mouse"/>
</dbReference>
<dbReference type="UCSC" id="uc057ats.1">
    <molecule id="O70583-3"/>
    <property type="organism name" value="mouse"/>
</dbReference>
<dbReference type="AGR" id="MGI:1100537"/>
<dbReference type="CTD" id="4281"/>
<dbReference type="MGI" id="MGI:1100537">
    <property type="gene designation" value="Mid1"/>
</dbReference>
<dbReference type="VEuPathDB" id="HostDB:ENSMUSG00000035299"/>
<dbReference type="eggNOG" id="KOG2177">
    <property type="taxonomic scope" value="Eukaryota"/>
</dbReference>
<dbReference type="GeneTree" id="ENSGT00940000155821"/>
<dbReference type="HOGENOM" id="CLU_013137_19_4_1"/>
<dbReference type="InParanoid" id="O70583"/>
<dbReference type="OMA" id="FCDQEPA"/>
<dbReference type="OrthoDB" id="9049620at2759"/>
<dbReference type="PhylomeDB" id="O70583"/>
<dbReference type="TreeFam" id="TF333654"/>
<dbReference type="BioGRID-ORCS" id="17318">
    <property type="hits" value="2 hits in 78 CRISPR screens"/>
</dbReference>
<dbReference type="ChiTaRS" id="Mid1">
    <property type="organism name" value="mouse"/>
</dbReference>
<dbReference type="PRO" id="PR:O70583"/>
<dbReference type="Proteomes" id="UP000000589">
    <property type="component" value="Chromosome X"/>
</dbReference>
<dbReference type="RNAct" id="O70583">
    <property type="molecule type" value="protein"/>
</dbReference>
<dbReference type="Bgee" id="ENSMUSG00000035299">
    <property type="expression patterns" value="Expressed in retinal neural layer and 211 other cell types or tissues"/>
</dbReference>
<dbReference type="ExpressionAtlas" id="O70583">
    <property type="expression patterns" value="baseline and differential"/>
</dbReference>
<dbReference type="GO" id="GO:0034451">
    <property type="term" value="C:centriolar satellite"/>
    <property type="evidence" value="ECO:0007669"/>
    <property type="project" value="Ensembl"/>
</dbReference>
<dbReference type="GO" id="GO:0005737">
    <property type="term" value="C:cytoplasm"/>
    <property type="evidence" value="ECO:0000314"/>
    <property type="project" value="MGI"/>
</dbReference>
<dbReference type="GO" id="GO:0005881">
    <property type="term" value="C:cytoplasmic microtubule"/>
    <property type="evidence" value="ECO:0007669"/>
    <property type="project" value="Ensembl"/>
</dbReference>
<dbReference type="GO" id="GO:0005829">
    <property type="term" value="C:cytosol"/>
    <property type="evidence" value="ECO:0007669"/>
    <property type="project" value="Ensembl"/>
</dbReference>
<dbReference type="GO" id="GO:0005794">
    <property type="term" value="C:Golgi apparatus"/>
    <property type="evidence" value="ECO:0007669"/>
    <property type="project" value="Ensembl"/>
</dbReference>
<dbReference type="GO" id="GO:0015630">
    <property type="term" value="C:microtubule cytoskeleton"/>
    <property type="evidence" value="ECO:0000314"/>
    <property type="project" value="MGI"/>
</dbReference>
<dbReference type="GO" id="GO:0008017">
    <property type="term" value="F:microtubule binding"/>
    <property type="evidence" value="ECO:0007669"/>
    <property type="project" value="Ensembl"/>
</dbReference>
<dbReference type="GO" id="GO:0051219">
    <property type="term" value="F:phosphoprotein binding"/>
    <property type="evidence" value="ECO:0007669"/>
    <property type="project" value="Ensembl"/>
</dbReference>
<dbReference type="GO" id="GO:0042803">
    <property type="term" value="F:protein homodimerization activity"/>
    <property type="evidence" value="ECO:0007669"/>
    <property type="project" value="Ensembl"/>
</dbReference>
<dbReference type="GO" id="GO:0016740">
    <property type="term" value="F:transferase activity"/>
    <property type="evidence" value="ECO:0007669"/>
    <property type="project" value="UniProtKB-KW"/>
</dbReference>
<dbReference type="GO" id="GO:0031625">
    <property type="term" value="F:ubiquitin protein ligase binding"/>
    <property type="evidence" value="ECO:0007669"/>
    <property type="project" value="Ensembl"/>
</dbReference>
<dbReference type="GO" id="GO:0008270">
    <property type="term" value="F:zinc ion binding"/>
    <property type="evidence" value="ECO:0007669"/>
    <property type="project" value="UniProtKB-KW"/>
</dbReference>
<dbReference type="GO" id="GO:0007026">
    <property type="term" value="P:negative regulation of microtubule depolymerization"/>
    <property type="evidence" value="ECO:0000316"/>
    <property type="project" value="MGI"/>
</dbReference>
<dbReference type="GO" id="GO:0032874">
    <property type="term" value="P:positive regulation of stress-activated MAPK cascade"/>
    <property type="evidence" value="ECO:0007669"/>
    <property type="project" value="Ensembl"/>
</dbReference>
<dbReference type="GO" id="GO:0035372">
    <property type="term" value="P:protein localization to microtubule"/>
    <property type="evidence" value="ECO:0007669"/>
    <property type="project" value="Ensembl"/>
</dbReference>
<dbReference type="CDD" id="cd19836">
    <property type="entry name" value="Bbox1_MID1_C-I"/>
    <property type="match status" value="1"/>
</dbReference>
<dbReference type="CDD" id="cd19822">
    <property type="entry name" value="Bbox2_MID1_C-I"/>
    <property type="match status" value="1"/>
</dbReference>
<dbReference type="CDD" id="cd00063">
    <property type="entry name" value="FN3"/>
    <property type="match status" value="1"/>
</dbReference>
<dbReference type="FunFam" id="3.30.160.60:FF:000334">
    <property type="entry name" value="E3 ubiquitin-protein ligase Midline-1"/>
    <property type="match status" value="1"/>
</dbReference>
<dbReference type="FunFam" id="3.30.40.10:FF:000014">
    <property type="entry name" value="probable E3 ubiquitin-protein ligase MID2"/>
    <property type="match status" value="1"/>
</dbReference>
<dbReference type="FunFam" id="4.10.830.40:FF:000002">
    <property type="entry name" value="probable E3 ubiquitin-protein ligase MID2"/>
    <property type="match status" value="1"/>
</dbReference>
<dbReference type="Gene3D" id="2.60.120.920">
    <property type="match status" value="1"/>
</dbReference>
<dbReference type="Gene3D" id="4.10.830.40">
    <property type="match status" value="1"/>
</dbReference>
<dbReference type="Gene3D" id="3.30.160.60">
    <property type="entry name" value="Classic Zinc Finger"/>
    <property type="match status" value="1"/>
</dbReference>
<dbReference type="Gene3D" id="2.60.40.10">
    <property type="entry name" value="Immunoglobulins"/>
    <property type="match status" value="1"/>
</dbReference>
<dbReference type="Gene3D" id="3.30.40.10">
    <property type="entry name" value="Zinc/RING finger domain, C3HC4 (zinc finger)"/>
    <property type="match status" value="1"/>
</dbReference>
<dbReference type="InterPro" id="IPR001870">
    <property type="entry name" value="B30.2/SPRY"/>
</dbReference>
<dbReference type="InterPro" id="IPR043136">
    <property type="entry name" value="B30.2/SPRY_sf"/>
</dbReference>
<dbReference type="InterPro" id="IPR003649">
    <property type="entry name" value="Bbox_C"/>
</dbReference>
<dbReference type="InterPro" id="IPR003879">
    <property type="entry name" value="Butyrophylin_SPRY"/>
</dbReference>
<dbReference type="InterPro" id="IPR013320">
    <property type="entry name" value="ConA-like_dom_sf"/>
</dbReference>
<dbReference type="InterPro" id="IPR017903">
    <property type="entry name" value="COS_domain"/>
</dbReference>
<dbReference type="InterPro" id="IPR050617">
    <property type="entry name" value="E3_ligase_FN3/SPRY"/>
</dbReference>
<dbReference type="InterPro" id="IPR003961">
    <property type="entry name" value="FN3_dom"/>
</dbReference>
<dbReference type="InterPro" id="IPR036116">
    <property type="entry name" value="FN3_sf"/>
</dbReference>
<dbReference type="InterPro" id="IPR013783">
    <property type="entry name" value="Ig-like_fold"/>
</dbReference>
<dbReference type="InterPro" id="IPR047095">
    <property type="entry name" value="MID1_Bbox1_Zfn"/>
</dbReference>
<dbReference type="InterPro" id="IPR027727">
    <property type="entry name" value="MID1_Bbox2_Zfn"/>
</dbReference>
<dbReference type="InterPro" id="IPR040859">
    <property type="entry name" value="Midline-1_COS"/>
</dbReference>
<dbReference type="InterPro" id="IPR003877">
    <property type="entry name" value="SPRY_dom"/>
</dbReference>
<dbReference type="InterPro" id="IPR027370">
    <property type="entry name" value="Znf-RING_euk"/>
</dbReference>
<dbReference type="InterPro" id="IPR000315">
    <property type="entry name" value="Znf_B-box"/>
</dbReference>
<dbReference type="InterPro" id="IPR001841">
    <property type="entry name" value="Znf_RING"/>
</dbReference>
<dbReference type="InterPro" id="IPR013083">
    <property type="entry name" value="Znf_RING/FYVE/PHD"/>
</dbReference>
<dbReference type="InterPro" id="IPR017907">
    <property type="entry name" value="Znf_RING_CS"/>
</dbReference>
<dbReference type="PANTHER" id="PTHR24099:SF23">
    <property type="entry name" value="E3 UBIQUITIN-PROTEIN LIGASE MIDLINE-1"/>
    <property type="match status" value="1"/>
</dbReference>
<dbReference type="PANTHER" id="PTHR24099">
    <property type="entry name" value="E3 UBIQUITIN-PROTEIN LIGASE TRIM36-RELATED"/>
    <property type="match status" value="1"/>
</dbReference>
<dbReference type="Pfam" id="PF22586">
    <property type="entry name" value="ANCHR-like_BBOX"/>
    <property type="match status" value="1"/>
</dbReference>
<dbReference type="Pfam" id="PF18568">
    <property type="entry name" value="COS"/>
    <property type="match status" value="1"/>
</dbReference>
<dbReference type="Pfam" id="PF00041">
    <property type="entry name" value="fn3"/>
    <property type="match status" value="1"/>
</dbReference>
<dbReference type="Pfam" id="PF00622">
    <property type="entry name" value="SPRY"/>
    <property type="match status" value="1"/>
</dbReference>
<dbReference type="Pfam" id="PF00643">
    <property type="entry name" value="zf-B_box"/>
    <property type="match status" value="1"/>
</dbReference>
<dbReference type="Pfam" id="PF13445">
    <property type="entry name" value="zf-RING_UBOX"/>
    <property type="match status" value="1"/>
</dbReference>
<dbReference type="PRINTS" id="PR01407">
    <property type="entry name" value="BUTYPHLNCDUF"/>
</dbReference>
<dbReference type="SMART" id="SM00502">
    <property type="entry name" value="BBC"/>
    <property type="match status" value="1"/>
</dbReference>
<dbReference type="SMART" id="SM00336">
    <property type="entry name" value="BBOX"/>
    <property type="match status" value="2"/>
</dbReference>
<dbReference type="SMART" id="SM00060">
    <property type="entry name" value="FN3"/>
    <property type="match status" value="1"/>
</dbReference>
<dbReference type="SMART" id="SM00184">
    <property type="entry name" value="RING"/>
    <property type="match status" value="1"/>
</dbReference>
<dbReference type="SMART" id="SM00449">
    <property type="entry name" value="SPRY"/>
    <property type="match status" value="1"/>
</dbReference>
<dbReference type="SUPFAM" id="SSF57845">
    <property type="entry name" value="B-box zinc-binding domain"/>
    <property type="match status" value="1"/>
</dbReference>
<dbReference type="SUPFAM" id="SSF49899">
    <property type="entry name" value="Concanavalin A-like lectins/glucanases"/>
    <property type="match status" value="1"/>
</dbReference>
<dbReference type="SUPFAM" id="SSF49265">
    <property type="entry name" value="Fibronectin type III"/>
    <property type="match status" value="1"/>
</dbReference>
<dbReference type="SUPFAM" id="SSF57850">
    <property type="entry name" value="RING/U-box"/>
    <property type="match status" value="1"/>
</dbReference>
<dbReference type="PROSITE" id="PS50188">
    <property type="entry name" value="B302_SPRY"/>
    <property type="match status" value="1"/>
</dbReference>
<dbReference type="PROSITE" id="PS51262">
    <property type="entry name" value="COS"/>
    <property type="match status" value="1"/>
</dbReference>
<dbReference type="PROSITE" id="PS50853">
    <property type="entry name" value="FN3"/>
    <property type="match status" value="1"/>
</dbReference>
<dbReference type="PROSITE" id="PS50119">
    <property type="entry name" value="ZF_BBOX"/>
    <property type="match status" value="1"/>
</dbReference>
<dbReference type="PROSITE" id="PS00518">
    <property type="entry name" value="ZF_RING_1"/>
    <property type="match status" value="1"/>
</dbReference>
<dbReference type="PROSITE" id="PS50089">
    <property type="entry name" value="ZF_RING_2"/>
    <property type="match status" value="1"/>
</dbReference>
<keyword id="KW-0025">Alternative splicing</keyword>
<keyword id="KW-0175">Coiled coil</keyword>
<keyword id="KW-0963">Cytoplasm</keyword>
<keyword id="KW-0206">Cytoskeleton</keyword>
<keyword id="KW-0479">Metal-binding</keyword>
<keyword id="KW-0493">Microtubule</keyword>
<keyword id="KW-0597">Phosphoprotein</keyword>
<keyword id="KW-1185">Reference proteome</keyword>
<keyword id="KW-0677">Repeat</keyword>
<keyword id="KW-0808">Transferase</keyword>
<keyword id="KW-0833">Ubl conjugation pathway</keyword>
<keyword id="KW-0862">Zinc</keyword>
<keyword id="KW-0863">Zinc-finger</keyword>
<comment type="function">
    <text evidence="2">Has E3 ubiquitin ligase activity towards IGBP1, promoting its monoubiquitination, which results in deprotection of the catalytic subunit of protein phosphatase PP2A, and its subsequent degradation by polyubiquitination.</text>
</comment>
<comment type="catalytic activity">
    <reaction>
        <text>S-ubiquitinyl-[E2 ubiquitin-conjugating enzyme]-L-cysteine + [acceptor protein]-L-lysine = [E2 ubiquitin-conjugating enzyme]-L-cysteine + N(6)-ubiquitinyl-[acceptor protein]-L-lysine.</text>
        <dbReference type="EC" id="2.3.2.27"/>
    </reaction>
</comment>
<comment type="subunit">
    <text evidence="2">Homodimer or heterodimer with MID2. Interacts with IGBP1.</text>
</comment>
<comment type="interaction">
    <interactant intactId="EBI-472994">
        <id>O70583</id>
    </interactant>
    <interactant intactId="EBI-473024">
        <id>Q9CQ20</id>
        <label>Mid1ip1</label>
    </interactant>
    <organismsDiffer>false</organismsDiffer>
    <experiments>8</experiments>
</comment>
<comment type="subcellular location">
    <subcellularLocation>
        <location evidence="2">Cytoplasm</location>
    </subcellularLocation>
    <subcellularLocation>
        <location evidence="2">Cytoplasm</location>
        <location evidence="2">Cytoskeleton</location>
    </subcellularLocation>
    <text evidence="2">Microtubule-associated.</text>
</comment>
<comment type="alternative products">
    <event type="alternative splicing"/>
    <isoform>
        <id>O70583-1</id>
        <name>1</name>
        <sequence type="displayed"/>
    </isoform>
    <isoform>
        <id>O70583-2</id>
        <name>2</name>
        <sequence type="described" ref="VSP_005736"/>
    </isoform>
    <isoform>
        <id>O70583-3</id>
        <name>3</name>
        <sequence type="described" ref="VSP_010811 VSP_005736"/>
    </isoform>
</comment>
<comment type="tissue specificity">
    <text evidence="11">Ubiquitously expressed in fetus and adult. At 9 dpc-10.5 dpc, highest expression found in frontonasal processes, branchial arches and CNS. From 12.5 dpc to 16.5 dpc, high levels found in rostral part of CNS. At 14.5 dpc, begins to be highly expressed in kidney and lung. At 16.5 dpc, highly expressed in the mucosa of the hindgut and cutaneous region of the stomach.</text>
</comment>
<comment type="developmental stage">
    <text evidence="11">Expressed throughout embryonic development with highest levels from 7-11 dpc. Also expressed in the adult.</text>
</comment>
<comment type="PTM">
    <text evidence="10">Phosphorylated.</text>
</comment>
<comment type="similarity">
    <text evidence="15">Belongs to the TRIM/RBCC family.</text>
</comment>
<comment type="sequence caution" evidence="15">
    <conflict type="erroneous termination">
        <sequence resource="EMBL-CDS" id="AAH53704"/>
    </conflict>
    <text>Truncated C-terminus.</text>
</comment>
<protein>
    <recommendedName>
        <fullName>E3 ubiquitin-protein ligase Midline-1</fullName>
        <ecNumber>2.3.2.27</ecNumber>
    </recommendedName>
    <alternativeName>
        <fullName>Midin</fullName>
    </alternativeName>
    <alternativeName>
        <fullName>RING finger protein Midline-1</fullName>
    </alternativeName>
    <alternativeName>
        <fullName evidence="15">RING-type E3 ubiquitin transferase Midline-1</fullName>
    </alternativeName>
    <alternativeName>
        <fullName>Tripartite motif-containing protein 18</fullName>
    </alternativeName>
</protein>
<sequence length="680" mass="76136">METLESELTCPICLELFEDPLLLPCAHSLCFNCAHRILVSHCATNEPVESINAFQCPTCRHVITLSQRGLDGLKRNVTLQNIIDRFQKASVSGPNSPSETRRERAFDANTMSSAEKVLCQFCDQDPAQDAVKTCVTCEVSYCDECLKATHPNKKPFTGHRLIEPIPDSHIRGLMCLEHEDEKVNMYCVTDDQLICALCKLVGRHRDHQVAALSERYDKLKQNLESNLTNLIKRNTELETLLAKLIQTCQHVEVNASRQEAKLTEECDLLIEIIQQRRQIIGTKIKEGKVIRLRKLAQQIANCKQCLERSASLISQAEHSLKENDHARFLQTAKNITERVSMATASSQVLIPEINLNDTFDTFALDFSREKKLLECLDYLTAPNPPAIREELCTASYDTITVHWTSEDEFSVVSYELQYTIFTGQANVVNVACDGTCLLGSAGLCNSADSWMIVPNIKQNHYTVHGLQSGTKYIFTVKAINQAGSRSSEPGKLKTNSQPFRLDPKSAHRKLKVSHDNLTVERDESSSKKSHAPERFAGQGSYGVAGNVFIDSGRHYWEVVTSGSTWYAIGLAYRSAPKHEWIGKNAASWALCRCHNHWAVRHDGKETPIAPAPHLRRVGVLLDYDNGSIAFYDALSSVHLHTFHAALAQPVCPTFTVWNKCLTIVTGLPIPDHLDCTEQRP</sequence>
<reference key="1">
    <citation type="journal article" date="1998" name="Hum. Mol. Genet.">
        <title>The mouse Mid1 gene: implications for the pathogenesis of Opitz syndrome and the evolution of the mammalian pseudoautosomal region.</title>
        <authorList>
            <person name="Zotto L.D."/>
            <person name="Quaderi N.A."/>
            <person name="Elliott R."/>
            <person name="Lingerfelter P.A."/>
            <person name="Carrel L."/>
            <person name="Valsecchi V."/>
            <person name="Montini E."/>
            <person name="Yen C.-H."/>
            <person name="Chapman V."/>
            <person name="Kalcheva I."/>
            <person name="Arrigo G."/>
            <person name="Zuffardi O."/>
            <person name="Thomas S."/>
            <person name="Willard H.F."/>
            <person name="Ballabio A."/>
            <person name="Disteche C.M."/>
            <person name="Rugarli E.I."/>
        </authorList>
    </citation>
    <scope>NUCLEOTIDE SEQUENCE [MRNA] (ISOFORMS 1 AND 2)</scope>
    <source>
        <tissue>Embryo</tissue>
    </source>
</reference>
<reference key="2">
    <citation type="journal article" date="1997" name="Proc. Natl. Acad. Sci. U.S.A.">
        <title>A gene spans the pseudoautosomal boundary in mice.</title>
        <authorList>
            <person name="Palmer S."/>
            <person name="Perry J."/>
            <person name="Kipling D."/>
            <person name="Ashworth A."/>
        </authorList>
    </citation>
    <scope>NUCLEOTIDE SEQUENCE [MRNA] (ISOFORM 2)</scope>
</reference>
<reference key="3">
    <citation type="journal article" date="2009" name="PLoS Biol.">
        <title>Lineage-specific biology revealed by a finished genome assembly of the mouse.</title>
        <authorList>
            <person name="Church D.M."/>
            <person name="Goodstadt L."/>
            <person name="Hillier L.W."/>
            <person name="Zody M.C."/>
            <person name="Goldstein S."/>
            <person name="She X."/>
            <person name="Bult C.J."/>
            <person name="Agarwala R."/>
            <person name="Cherry J.L."/>
            <person name="DiCuccio M."/>
            <person name="Hlavina W."/>
            <person name="Kapustin Y."/>
            <person name="Meric P."/>
            <person name="Maglott D."/>
            <person name="Birtle Z."/>
            <person name="Marques A.C."/>
            <person name="Graves T."/>
            <person name="Zhou S."/>
            <person name="Teague B."/>
            <person name="Potamousis K."/>
            <person name="Churas C."/>
            <person name="Place M."/>
            <person name="Herschleb J."/>
            <person name="Runnheim R."/>
            <person name="Forrest D."/>
            <person name="Amos-Landgraf J."/>
            <person name="Schwartz D.C."/>
            <person name="Cheng Z."/>
            <person name="Lindblad-Toh K."/>
            <person name="Eichler E.E."/>
            <person name="Ponting C.P."/>
        </authorList>
    </citation>
    <scope>NUCLEOTIDE SEQUENCE [LARGE SCALE GENOMIC DNA]</scope>
    <source>
        <strain>C57BL/6J</strain>
    </source>
</reference>
<reference key="4">
    <citation type="journal article" date="2004" name="Genome Res.">
        <title>The status, quality, and expansion of the NIH full-length cDNA project: the Mammalian Gene Collection (MGC).</title>
        <authorList>
            <consortium name="The MGC Project Team"/>
        </authorList>
    </citation>
    <scope>NUCLEOTIDE SEQUENCE [LARGE SCALE MRNA] (ISOFORM 3)</scope>
    <source>
        <strain>C3H/He</strain>
        <tissue>Osteoblast</tissue>
    </source>
</reference>
<reference key="5">
    <citation type="journal article" date="1998" name="Genomics">
        <title>Characterization and physical mapping in human and mouse of a novel RING finger gene in Xp22.</title>
        <authorList>
            <person name="Van den Veyver I.B."/>
            <person name="Cormier T.A."/>
            <person name="Jurecic V."/>
            <person name="Baldini A."/>
            <person name="Zoghbi H.Y."/>
        </authorList>
    </citation>
    <scope>TISSUE SPECIFICITY</scope>
    <scope>DEVELOPMENTAL STAGE</scope>
</reference>
<reference key="6">
    <citation type="journal article" date="2001" name="Proc. Natl. Acad. Sci. U.S.A.">
        <title>Phosphorylation and microtubule association of the Opitz syndrome protein mid-1 is regulated by protein phosphatase 2A via binding to the regulatory subunit alpha 4.</title>
        <authorList>
            <person name="Liu J."/>
            <person name="Prickett T.D."/>
            <person name="Elliott E."/>
            <person name="Meroni G."/>
            <person name="Brautigan D.L."/>
        </authorList>
    </citation>
    <scope>PHOSPHORYLATION</scope>
</reference>
<organism>
    <name type="scientific">Mus musculus</name>
    <name type="common">Mouse</name>
    <dbReference type="NCBI Taxonomy" id="10090"/>
    <lineage>
        <taxon>Eukaryota</taxon>
        <taxon>Metazoa</taxon>
        <taxon>Chordata</taxon>
        <taxon>Craniata</taxon>
        <taxon>Vertebrata</taxon>
        <taxon>Euteleostomi</taxon>
        <taxon>Mammalia</taxon>
        <taxon>Eutheria</taxon>
        <taxon>Euarchontoglires</taxon>
        <taxon>Glires</taxon>
        <taxon>Rodentia</taxon>
        <taxon>Myomorpha</taxon>
        <taxon>Muroidea</taxon>
        <taxon>Muridae</taxon>
        <taxon>Murinae</taxon>
        <taxon>Mus</taxon>
        <taxon>Mus</taxon>
    </lineage>
</organism>